<protein>
    <recommendedName>
        <fullName>Kappa-casein</fullName>
    </recommendedName>
</protein>
<organism>
    <name type="scientific">Ovibos moschatus</name>
    <name type="common">Muskox</name>
    <dbReference type="NCBI Taxonomy" id="37176"/>
    <lineage>
        <taxon>Eukaryota</taxon>
        <taxon>Metazoa</taxon>
        <taxon>Chordata</taxon>
        <taxon>Craniata</taxon>
        <taxon>Vertebrata</taxon>
        <taxon>Euteleostomi</taxon>
        <taxon>Mammalia</taxon>
        <taxon>Eutheria</taxon>
        <taxon>Laurasiatheria</taxon>
        <taxon>Artiodactyla</taxon>
        <taxon>Ruminantia</taxon>
        <taxon>Pecora</taxon>
        <taxon>Bovidae</taxon>
        <taxon>Caprinae</taxon>
        <taxon>Ovibos</taxon>
    </lineage>
</organism>
<gene>
    <name type="primary">CSN3</name>
    <name type="synonym">CSN10</name>
    <name type="synonym">CSNK</name>
</gene>
<keyword id="KW-0325">Glycoprotein</keyword>
<keyword id="KW-0494">Milk protein</keyword>
<keyword id="KW-0597">Phosphoprotein</keyword>
<keyword id="KW-0964">Secreted</keyword>
<dbReference type="EMBL" id="U37514">
    <property type="protein sequence ID" value="AAC48660.1"/>
    <property type="molecule type" value="Genomic_DNA"/>
</dbReference>
<dbReference type="GlyCosmos" id="Q95227">
    <property type="glycosylation" value="8 sites, No reported glycans"/>
</dbReference>
<dbReference type="GO" id="GO:0005615">
    <property type="term" value="C:extracellular space"/>
    <property type="evidence" value="ECO:0007669"/>
    <property type="project" value="TreeGrafter"/>
</dbReference>
<dbReference type="GO" id="GO:0007595">
    <property type="term" value="P:lactation"/>
    <property type="evidence" value="ECO:0007669"/>
    <property type="project" value="TreeGrafter"/>
</dbReference>
<dbReference type="GO" id="GO:0050821">
    <property type="term" value="P:protein stabilization"/>
    <property type="evidence" value="ECO:0007669"/>
    <property type="project" value="TreeGrafter"/>
</dbReference>
<dbReference type="InterPro" id="IPR000117">
    <property type="entry name" value="Casein_kappa"/>
</dbReference>
<dbReference type="PANTHER" id="PTHR11470">
    <property type="entry name" value="KAPPA CASEIN"/>
    <property type="match status" value="1"/>
</dbReference>
<dbReference type="PANTHER" id="PTHR11470:SF2">
    <property type="entry name" value="KAPPA-CASEIN"/>
    <property type="match status" value="1"/>
</dbReference>
<dbReference type="Pfam" id="PF00997">
    <property type="entry name" value="Casein_kappa"/>
    <property type="match status" value="1"/>
</dbReference>
<accession>Q95227</accession>
<name>CASK_OVIMO</name>
<reference key="1">
    <citation type="journal article" date="1996" name="Mol. Phylogenet. Evol.">
        <title>K-casein gene phylogeny of higher ruminants (Pecora, Artiodactyla).</title>
        <authorList>
            <person name="Cronin M.A."/>
            <person name="Stuart R."/>
            <person name="Pierson B.J."/>
            <person name="Patton J.C."/>
        </authorList>
    </citation>
    <scope>NUCLEOTIDE SEQUENCE [GENOMIC DNA]</scope>
</reference>
<sequence length="124" mass="13434">VALINNQFLPYPYYAKPVAVRSPAQTLQWQVLPNTAPAKSCQDQPTTMARHPHPHLSFMAIPPKKDQDKTEIPTINTIASAETTVHSTPTTEAIVNTVDNPEASSESIVSAPETNTAQVTSTEV</sequence>
<evidence type="ECO:0000250" key="1"/>
<evidence type="ECO:0000250" key="2">
    <source>
        <dbReference type="UniProtKB" id="P02668"/>
    </source>
</evidence>
<evidence type="ECO:0000250" key="3">
    <source>
        <dbReference type="UniProtKB" id="P02670"/>
    </source>
</evidence>
<evidence type="ECO:0000256" key="4">
    <source>
        <dbReference type="SAM" id="MobiDB-lite"/>
    </source>
</evidence>
<evidence type="ECO:0000305" key="5"/>
<comment type="function">
    <text>Kappa-casein stabilizes micelle formation, preventing casein precipitation in milk.</text>
</comment>
<comment type="subcellular location">
    <subcellularLocation>
        <location>Secreted</location>
    </subcellularLocation>
</comment>
<comment type="tissue specificity">
    <text>Mammary gland specific. Secreted in milk.</text>
</comment>
<comment type="similarity">
    <text evidence="5">Belongs to the kappa-casein family.</text>
</comment>
<feature type="chain" id="PRO_0000144118" description="Kappa-casein">
    <location>
        <begin position="1" status="less than"/>
        <end position="124"/>
    </location>
</feature>
<feature type="region of interest" description="Disordered" evidence="4">
    <location>
        <begin position="98"/>
        <end position="124"/>
    </location>
</feature>
<feature type="site" description="Cleavage; by chymosin/rennin" evidence="1">
    <location>
        <begin position="58"/>
        <end position="59"/>
    </location>
</feature>
<feature type="modified residue" description="Phosphoserine" evidence="2">
    <location>
        <position position="80"/>
    </location>
</feature>
<feature type="modified residue" description="Phosphoserine; alternate" evidence="2">
    <location>
        <position position="104"/>
    </location>
</feature>
<feature type="modified residue" description="Phosphoserine" evidence="3">
    <location>
        <position position="121"/>
    </location>
</feature>
<feature type="glycosylation site" description="O-linked (GalNAc...) threonine" evidence="2">
    <location>
        <position position="74"/>
    </location>
</feature>
<feature type="glycosylation site" description="O-linked (GalNAc...) threonine" evidence="2">
    <location>
        <position position="84"/>
    </location>
</feature>
<feature type="glycosylation site" description="O-linked (GalNAc...) serine" evidence="2">
    <location>
        <position position="87"/>
    </location>
</feature>
<feature type="glycosylation site" description="O-linked (GalNAc...) threonine" evidence="2">
    <location>
        <position position="88"/>
    </location>
</feature>
<feature type="glycosylation site" description="O-linked (GalNAc...) threonine" evidence="2">
    <location>
        <position position="91"/>
    </location>
</feature>
<feature type="glycosylation site" description="O-linked (GalNAc...) threonine" evidence="2">
    <location>
        <position position="97"/>
    </location>
</feature>
<feature type="glycosylation site" description="O-linked (GalNAc...) serine; alternate" evidence="2">
    <location>
        <position position="104"/>
    </location>
</feature>
<feature type="glycosylation site" description="O-linked (GalNAc...) threonine" evidence="2">
    <location>
        <position position="120"/>
    </location>
</feature>
<feature type="non-terminal residue">
    <location>
        <position position="1"/>
    </location>
</feature>
<proteinExistence type="evidence at transcript level"/>